<sequence length="306" mass="32384">MNFPDLIPDLKPAMPELRGRLLANAPLAPLTWFRVGGPAQLLFTPADENDLAYFLARLPKEIPVSIVGVGSNLIVRDGGLPGAVIRLAARGFGETRVDGDVIHAGAAALDKRVAETAAAAGIGGLEFLYGIPGTIGGALRMNAGANGGEIKDVLEEATGIGRDGSLHVFRNAGMRLSYRKSGVDASVIFTSVRLRGAIAPPETIRAKMDEVQKHRETAQPIREKTGGSTFKNPPGQSAWKLIDEAGCRGLRVGGAQVSELHCNFLINTGDATAADIETLGETVRDRVKTHSGIELQWEIKRIGIAA</sequence>
<evidence type="ECO:0000255" key="1">
    <source>
        <dbReference type="HAMAP-Rule" id="MF_00037"/>
    </source>
</evidence>
<evidence type="ECO:0000305" key="2"/>
<name>MURB_RHOP5</name>
<keyword id="KW-0131">Cell cycle</keyword>
<keyword id="KW-0132">Cell division</keyword>
<keyword id="KW-0133">Cell shape</keyword>
<keyword id="KW-0961">Cell wall biogenesis/degradation</keyword>
<keyword id="KW-0963">Cytoplasm</keyword>
<keyword id="KW-0274">FAD</keyword>
<keyword id="KW-0285">Flavoprotein</keyword>
<keyword id="KW-0521">NADP</keyword>
<keyword id="KW-0560">Oxidoreductase</keyword>
<keyword id="KW-0573">Peptidoglycan synthesis</keyword>
<organism>
    <name type="scientific">Rhodopseudomonas palustris (strain BisA53)</name>
    <dbReference type="NCBI Taxonomy" id="316055"/>
    <lineage>
        <taxon>Bacteria</taxon>
        <taxon>Pseudomonadati</taxon>
        <taxon>Pseudomonadota</taxon>
        <taxon>Alphaproteobacteria</taxon>
        <taxon>Hyphomicrobiales</taxon>
        <taxon>Nitrobacteraceae</taxon>
        <taxon>Rhodopseudomonas</taxon>
    </lineage>
</organism>
<comment type="function">
    <text evidence="1">Cell wall formation.</text>
</comment>
<comment type="catalytic activity">
    <reaction evidence="1">
        <text>UDP-N-acetyl-alpha-D-muramate + NADP(+) = UDP-N-acetyl-3-O-(1-carboxyvinyl)-alpha-D-glucosamine + NADPH + H(+)</text>
        <dbReference type="Rhea" id="RHEA:12248"/>
        <dbReference type="ChEBI" id="CHEBI:15378"/>
        <dbReference type="ChEBI" id="CHEBI:57783"/>
        <dbReference type="ChEBI" id="CHEBI:58349"/>
        <dbReference type="ChEBI" id="CHEBI:68483"/>
        <dbReference type="ChEBI" id="CHEBI:70757"/>
        <dbReference type="EC" id="1.3.1.98"/>
    </reaction>
</comment>
<comment type="cofactor">
    <cofactor evidence="1">
        <name>FAD</name>
        <dbReference type="ChEBI" id="CHEBI:57692"/>
    </cofactor>
</comment>
<comment type="pathway">
    <text evidence="1">Cell wall biogenesis; peptidoglycan biosynthesis.</text>
</comment>
<comment type="subcellular location">
    <subcellularLocation>
        <location evidence="1">Cytoplasm</location>
    </subcellularLocation>
</comment>
<comment type="similarity">
    <text evidence="1">Belongs to the MurB family.</text>
</comment>
<comment type="sequence caution" evidence="2">
    <conflict type="erroneous initiation">
        <sequence resource="EMBL-CDS" id="ABJ06054"/>
    </conflict>
</comment>
<proteinExistence type="inferred from homology"/>
<accession>Q07PT0</accession>
<reference key="1">
    <citation type="submission" date="2006-09" db="EMBL/GenBank/DDBJ databases">
        <title>Complete sequence of Rhodopseudomonas palustris BisA53.</title>
        <authorList>
            <consortium name="US DOE Joint Genome Institute"/>
            <person name="Copeland A."/>
            <person name="Lucas S."/>
            <person name="Lapidus A."/>
            <person name="Barry K."/>
            <person name="Detter J.C."/>
            <person name="Glavina del Rio T."/>
            <person name="Hammon N."/>
            <person name="Israni S."/>
            <person name="Dalin E."/>
            <person name="Tice H."/>
            <person name="Pitluck S."/>
            <person name="Chain P."/>
            <person name="Malfatti S."/>
            <person name="Shin M."/>
            <person name="Vergez L."/>
            <person name="Schmutz J."/>
            <person name="Larimer F."/>
            <person name="Land M."/>
            <person name="Hauser L."/>
            <person name="Pelletier D.A."/>
            <person name="Kyrpides N."/>
            <person name="Kim E."/>
            <person name="Harwood C.S."/>
            <person name="Oda Y."/>
            <person name="Richardson P."/>
        </authorList>
    </citation>
    <scope>NUCLEOTIDE SEQUENCE [LARGE SCALE GENOMIC DNA]</scope>
    <source>
        <strain>BisA53</strain>
    </source>
</reference>
<gene>
    <name evidence="1" type="primary">murB</name>
    <name type="ordered locus">RPE_2110</name>
</gene>
<dbReference type="EC" id="1.3.1.98" evidence="1"/>
<dbReference type="EMBL" id="CP000463">
    <property type="protein sequence ID" value="ABJ06054.1"/>
    <property type="status" value="ALT_INIT"/>
    <property type="molecule type" value="Genomic_DNA"/>
</dbReference>
<dbReference type="SMR" id="Q07PT0"/>
<dbReference type="STRING" id="316055.RPE_2110"/>
<dbReference type="KEGG" id="rpe:RPE_2110"/>
<dbReference type="eggNOG" id="COG0812">
    <property type="taxonomic scope" value="Bacteria"/>
</dbReference>
<dbReference type="HOGENOM" id="CLU_035304_1_0_5"/>
<dbReference type="OrthoDB" id="9804753at2"/>
<dbReference type="UniPathway" id="UPA00219"/>
<dbReference type="GO" id="GO:0005829">
    <property type="term" value="C:cytosol"/>
    <property type="evidence" value="ECO:0007669"/>
    <property type="project" value="TreeGrafter"/>
</dbReference>
<dbReference type="GO" id="GO:0071949">
    <property type="term" value="F:FAD binding"/>
    <property type="evidence" value="ECO:0007669"/>
    <property type="project" value="InterPro"/>
</dbReference>
<dbReference type="GO" id="GO:0008762">
    <property type="term" value="F:UDP-N-acetylmuramate dehydrogenase activity"/>
    <property type="evidence" value="ECO:0007669"/>
    <property type="project" value="UniProtKB-UniRule"/>
</dbReference>
<dbReference type="GO" id="GO:0051301">
    <property type="term" value="P:cell division"/>
    <property type="evidence" value="ECO:0007669"/>
    <property type="project" value="UniProtKB-KW"/>
</dbReference>
<dbReference type="GO" id="GO:0071555">
    <property type="term" value="P:cell wall organization"/>
    <property type="evidence" value="ECO:0007669"/>
    <property type="project" value="UniProtKB-KW"/>
</dbReference>
<dbReference type="GO" id="GO:0009252">
    <property type="term" value="P:peptidoglycan biosynthetic process"/>
    <property type="evidence" value="ECO:0007669"/>
    <property type="project" value="UniProtKB-UniRule"/>
</dbReference>
<dbReference type="GO" id="GO:0008360">
    <property type="term" value="P:regulation of cell shape"/>
    <property type="evidence" value="ECO:0007669"/>
    <property type="project" value="UniProtKB-KW"/>
</dbReference>
<dbReference type="Gene3D" id="3.30.465.10">
    <property type="match status" value="1"/>
</dbReference>
<dbReference type="Gene3D" id="3.90.78.10">
    <property type="entry name" value="UDP-N-acetylenolpyruvoylglucosamine reductase, C-terminal domain"/>
    <property type="match status" value="1"/>
</dbReference>
<dbReference type="Gene3D" id="3.30.43.10">
    <property type="entry name" value="Uridine Diphospho-n-acetylenolpyruvylglucosamine Reductase, domain 2"/>
    <property type="match status" value="1"/>
</dbReference>
<dbReference type="HAMAP" id="MF_00037">
    <property type="entry name" value="MurB"/>
    <property type="match status" value="1"/>
</dbReference>
<dbReference type="InterPro" id="IPR016166">
    <property type="entry name" value="FAD-bd_PCMH"/>
</dbReference>
<dbReference type="InterPro" id="IPR036318">
    <property type="entry name" value="FAD-bd_PCMH-like_sf"/>
</dbReference>
<dbReference type="InterPro" id="IPR016167">
    <property type="entry name" value="FAD-bd_PCMH_sub1"/>
</dbReference>
<dbReference type="InterPro" id="IPR016169">
    <property type="entry name" value="FAD-bd_PCMH_sub2"/>
</dbReference>
<dbReference type="InterPro" id="IPR003170">
    <property type="entry name" value="MurB"/>
</dbReference>
<dbReference type="InterPro" id="IPR011601">
    <property type="entry name" value="MurB_C"/>
</dbReference>
<dbReference type="InterPro" id="IPR036635">
    <property type="entry name" value="MurB_C_sf"/>
</dbReference>
<dbReference type="InterPro" id="IPR006094">
    <property type="entry name" value="Oxid_FAD_bind_N"/>
</dbReference>
<dbReference type="NCBIfam" id="TIGR00179">
    <property type="entry name" value="murB"/>
    <property type="match status" value="1"/>
</dbReference>
<dbReference type="NCBIfam" id="NF010480">
    <property type="entry name" value="PRK13905.1"/>
    <property type="match status" value="1"/>
</dbReference>
<dbReference type="PANTHER" id="PTHR21071">
    <property type="entry name" value="UDP-N-ACETYLENOLPYRUVOYLGLUCOSAMINE REDUCTASE"/>
    <property type="match status" value="1"/>
</dbReference>
<dbReference type="PANTHER" id="PTHR21071:SF4">
    <property type="entry name" value="UDP-N-ACETYLENOLPYRUVOYLGLUCOSAMINE REDUCTASE"/>
    <property type="match status" value="1"/>
</dbReference>
<dbReference type="Pfam" id="PF01565">
    <property type="entry name" value="FAD_binding_4"/>
    <property type="match status" value="1"/>
</dbReference>
<dbReference type="Pfam" id="PF02873">
    <property type="entry name" value="MurB_C"/>
    <property type="match status" value="1"/>
</dbReference>
<dbReference type="SUPFAM" id="SSF56176">
    <property type="entry name" value="FAD-binding/transporter-associated domain-like"/>
    <property type="match status" value="1"/>
</dbReference>
<dbReference type="SUPFAM" id="SSF56194">
    <property type="entry name" value="Uridine diphospho-N-Acetylenolpyruvylglucosamine reductase, MurB, C-terminal domain"/>
    <property type="match status" value="1"/>
</dbReference>
<dbReference type="PROSITE" id="PS51387">
    <property type="entry name" value="FAD_PCMH"/>
    <property type="match status" value="1"/>
</dbReference>
<protein>
    <recommendedName>
        <fullName evidence="1">UDP-N-acetylenolpyruvoylglucosamine reductase</fullName>
        <ecNumber evidence="1">1.3.1.98</ecNumber>
    </recommendedName>
    <alternativeName>
        <fullName evidence="1">UDP-N-acetylmuramate dehydrogenase</fullName>
    </alternativeName>
</protein>
<feature type="chain" id="PRO_0000332494" description="UDP-N-acetylenolpyruvoylglucosamine reductase">
    <location>
        <begin position="1"/>
        <end position="306"/>
    </location>
</feature>
<feature type="domain" description="FAD-binding PCMH-type" evidence="1">
    <location>
        <begin position="34"/>
        <end position="199"/>
    </location>
</feature>
<feature type="active site" evidence="1">
    <location>
        <position position="179"/>
    </location>
</feature>
<feature type="active site" description="Proton donor" evidence="1">
    <location>
        <position position="228"/>
    </location>
</feature>
<feature type="active site" evidence="1">
    <location>
        <position position="298"/>
    </location>
</feature>